<feature type="chain" id="PRO_1000004188" description="Large ribosomal subunit protein bL33">
    <location>
        <begin position="1"/>
        <end position="56"/>
    </location>
</feature>
<evidence type="ECO:0000255" key="1">
    <source>
        <dbReference type="HAMAP-Rule" id="MF_00294"/>
    </source>
</evidence>
<evidence type="ECO:0000305" key="2"/>
<protein>
    <recommendedName>
        <fullName evidence="1">Large ribosomal subunit protein bL33</fullName>
    </recommendedName>
    <alternativeName>
        <fullName evidence="2">50S ribosomal protein L33</fullName>
    </alternativeName>
</protein>
<gene>
    <name evidence="1" type="primary">rpmG</name>
    <name type="ordered locus">A1G_07465</name>
</gene>
<reference key="1">
    <citation type="submission" date="2007-09" db="EMBL/GenBank/DDBJ databases">
        <title>Complete genome sequence of Rickettsia rickettsii.</title>
        <authorList>
            <person name="Madan A."/>
            <person name="Fahey J."/>
            <person name="Helton E."/>
            <person name="Ketteman M."/>
            <person name="Madan A."/>
            <person name="Rodrigues S."/>
            <person name="Sanchez A."/>
            <person name="Dasch G."/>
            <person name="Eremeeva M."/>
        </authorList>
    </citation>
    <scope>NUCLEOTIDE SEQUENCE [LARGE SCALE GENOMIC DNA]</scope>
    <source>
        <strain>Sheila Smith</strain>
    </source>
</reference>
<sequence>MAKKNKNVLVRLVSTAGTGVFWVKKRNPKTQTEKLSFRKYDKVVRKHVLFKEEKIK</sequence>
<name>RL33_RICRS</name>
<comment type="similarity">
    <text evidence="1">Belongs to the bacterial ribosomal protein bL33 family.</text>
</comment>
<proteinExistence type="inferred from homology"/>
<keyword id="KW-0687">Ribonucleoprotein</keyword>
<keyword id="KW-0689">Ribosomal protein</keyword>
<dbReference type="EMBL" id="CP000848">
    <property type="protein sequence ID" value="ABV76932.1"/>
    <property type="molecule type" value="Genomic_DNA"/>
</dbReference>
<dbReference type="RefSeq" id="WP_004997072.1">
    <property type="nucleotide sequence ID" value="NZ_CP121767.1"/>
</dbReference>
<dbReference type="SMR" id="A8GU57"/>
<dbReference type="GeneID" id="95361741"/>
<dbReference type="KEGG" id="rri:A1G_07465"/>
<dbReference type="HOGENOM" id="CLU_190949_1_0_5"/>
<dbReference type="Proteomes" id="UP000006832">
    <property type="component" value="Chromosome"/>
</dbReference>
<dbReference type="GO" id="GO:0005737">
    <property type="term" value="C:cytoplasm"/>
    <property type="evidence" value="ECO:0007669"/>
    <property type="project" value="UniProtKB-ARBA"/>
</dbReference>
<dbReference type="GO" id="GO:0015934">
    <property type="term" value="C:large ribosomal subunit"/>
    <property type="evidence" value="ECO:0007669"/>
    <property type="project" value="TreeGrafter"/>
</dbReference>
<dbReference type="GO" id="GO:0003735">
    <property type="term" value="F:structural constituent of ribosome"/>
    <property type="evidence" value="ECO:0007669"/>
    <property type="project" value="InterPro"/>
</dbReference>
<dbReference type="GO" id="GO:0006412">
    <property type="term" value="P:translation"/>
    <property type="evidence" value="ECO:0007669"/>
    <property type="project" value="UniProtKB-UniRule"/>
</dbReference>
<dbReference type="Gene3D" id="2.20.28.120">
    <property type="entry name" value="Ribosomal protein L33"/>
    <property type="match status" value="1"/>
</dbReference>
<dbReference type="HAMAP" id="MF_00294">
    <property type="entry name" value="Ribosomal_bL33"/>
    <property type="match status" value="1"/>
</dbReference>
<dbReference type="InterPro" id="IPR001705">
    <property type="entry name" value="Ribosomal_bL33"/>
</dbReference>
<dbReference type="InterPro" id="IPR018264">
    <property type="entry name" value="Ribosomal_bL33_CS"/>
</dbReference>
<dbReference type="InterPro" id="IPR038584">
    <property type="entry name" value="Ribosomal_bL33_sf"/>
</dbReference>
<dbReference type="InterPro" id="IPR011332">
    <property type="entry name" value="Ribosomal_zn-bd"/>
</dbReference>
<dbReference type="NCBIfam" id="NF001860">
    <property type="entry name" value="PRK00595.1"/>
    <property type="match status" value="1"/>
</dbReference>
<dbReference type="NCBIfam" id="TIGR01023">
    <property type="entry name" value="rpmG_bact"/>
    <property type="match status" value="1"/>
</dbReference>
<dbReference type="PANTHER" id="PTHR15238">
    <property type="entry name" value="54S RIBOSOMAL PROTEIN L39, MITOCHONDRIAL"/>
    <property type="match status" value="1"/>
</dbReference>
<dbReference type="PANTHER" id="PTHR15238:SF1">
    <property type="entry name" value="LARGE RIBOSOMAL SUBUNIT PROTEIN BL33M"/>
    <property type="match status" value="1"/>
</dbReference>
<dbReference type="Pfam" id="PF00471">
    <property type="entry name" value="Ribosomal_L33"/>
    <property type="match status" value="1"/>
</dbReference>
<dbReference type="SUPFAM" id="SSF57829">
    <property type="entry name" value="Zn-binding ribosomal proteins"/>
    <property type="match status" value="1"/>
</dbReference>
<dbReference type="PROSITE" id="PS00582">
    <property type="entry name" value="RIBOSOMAL_L33"/>
    <property type="match status" value="1"/>
</dbReference>
<organism>
    <name type="scientific">Rickettsia rickettsii (strain Sheila Smith)</name>
    <dbReference type="NCBI Taxonomy" id="392021"/>
    <lineage>
        <taxon>Bacteria</taxon>
        <taxon>Pseudomonadati</taxon>
        <taxon>Pseudomonadota</taxon>
        <taxon>Alphaproteobacteria</taxon>
        <taxon>Rickettsiales</taxon>
        <taxon>Rickettsiaceae</taxon>
        <taxon>Rickettsieae</taxon>
        <taxon>Rickettsia</taxon>
        <taxon>spotted fever group</taxon>
    </lineage>
</organism>
<accession>A8GU57</accession>